<comment type="function">
    <text evidence="1">One of the primary rRNA binding proteins, it binds directly to 16S rRNA where it helps nucleate assembly of the platform of the 30S subunit by binding and bridging several RNA helices of the 16S rRNA.</text>
</comment>
<comment type="function">
    <text evidence="1">Forms an intersubunit bridge (bridge B4) with the 23S rRNA of the 50S subunit in the ribosome.</text>
</comment>
<comment type="subunit">
    <text evidence="1">Part of the 30S ribosomal subunit. Forms a bridge to the 50S subunit in the 70S ribosome, contacting the 23S rRNA.</text>
</comment>
<comment type="similarity">
    <text evidence="1">Belongs to the universal ribosomal protein uS15 family.</text>
</comment>
<name>RS15_PROMS</name>
<proteinExistence type="inferred from homology"/>
<dbReference type="EMBL" id="CP000551">
    <property type="protein sequence ID" value="ABM70201.1"/>
    <property type="molecule type" value="Genomic_DNA"/>
</dbReference>
<dbReference type="RefSeq" id="WP_011818357.1">
    <property type="nucleotide sequence ID" value="NC_008816.1"/>
</dbReference>
<dbReference type="SMR" id="A2BQZ0"/>
<dbReference type="STRING" id="146891.A9601_09171"/>
<dbReference type="KEGG" id="pmb:A9601_09171"/>
<dbReference type="eggNOG" id="COG0184">
    <property type="taxonomic scope" value="Bacteria"/>
</dbReference>
<dbReference type="HOGENOM" id="CLU_148518_0_0_3"/>
<dbReference type="OrthoDB" id="9799262at2"/>
<dbReference type="Proteomes" id="UP000002590">
    <property type="component" value="Chromosome"/>
</dbReference>
<dbReference type="GO" id="GO:0022627">
    <property type="term" value="C:cytosolic small ribosomal subunit"/>
    <property type="evidence" value="ECO:0007669"/>
    <property type="project" value="TreeGrafter"/>
</dbReference>
<dbReference type="GO" id="GO:0019843">
    <property type="term" value="F:rRNA binding"/>
    <property type="evidence" value="ECO:0007669"/>
    <property type="project" value="UniProtKB-UniRule"/>
</dbReference>
<dbReference type="GO" id="GO:0003735">
    <property type="term" value="F:structural constituent of ribosome"/>
    <property type="evidence" value="ECO:0007669"/>
    <property type="project" value="InterPro"/>
</dbReference>
<dbReference type="GO" id="GO:0006412">
    <property type="term" value="P:translation"/>
    <property type="evidence" value="ECO:0007669"/>
    <property type="project" value="UniProtKB-UniRule"/>
</dbReference>
<dbReference type="CDD" id="cd00353">
    <property type="entry name" value="Ribosomal_S15p_S13e"/>
    <property type="match status" value="1"/>
</dbReference>
<dbReference type="FunFam" id="1.10.287.10:FF:000002">
    <property type="entry name" value="30S ribosomal protein S15"/>
    <property type="match status" value="1"/>
</dbReference>
<dbReference type="Gene3D" id="6.10.250.3130">
    <property type="match status" value="1"/>
</dbReference>
<dbReference type="Gene3D" id="1.10.287.10">
    <property type="entry name" value="S15/NS1, RNA-binding"/>
    <property type="match status" value="1"/>
</dbReference>
<dbReference type="HAMAP" id="MF_01343_B">
    <property type="entry name" value="Ribosomal_uS15_B"/>
    <property type="match status" value="1"/>
</dbReference>
<dbReference type="InterPro" id="IPR000589">
    <property type="entry name" value="Ribosomal_uS15"/>
</dbReference>
<dbReference type="InterPro" id="IPR005290">
    <property type="entry name" value="Ribosomal_uS15_bac-type"/>
</dbReference>
<dbReference type="InterPro" id="IPR009068">
    <property type="entry name" value="uS15_NS1_RNA-bd_sf"/>
</dbReference>
<dbReference type="NCBIfam" id="TIGR00952">
    <property type="entry name" value="S15_bact"/>
    <property type="match status" value="1"/>
</dbReference>
<dbReference type="PANTHER" id="PTHR23321">
    <property type="entry name" value="RIBOSOMAL PROTEIN S15, BACTERIAL AND ORGANELLAR"/>
    <property type="match status" value="1"/>
</dbReference>
<dbReference type="PANTHER" id="PTHR23321:SF26">
    <property type="entry name" value="SMALL RIBOSOMAL SUBUNIT PROTEIN US15M"/>
    <property type="match status" value="1"/>
</dbReference>
<dbReference type="Pfam" id="PF00312">
    <property type="entry name" value="Ribosomal_S15"/>
    <property type="match status" value="1"/>
</dbReference>
<dbReference type="SMART" id="SM01387">
    <property type="entry name" value="Ribosomal_S15"/>
    <property type="match status" value="1"/>
</dbReference>
<dbReference type="SUPFAM" id="SSF47060">
    <property type="entry name" value="S15/NS1 RNA-binding domain"/>
    <property type="match status" value="1"/>
</dbReference>
<dbReference type="PROSITE" id="PS00362">
    <property type="entry name" value="RIBOSOMAL_S15"/>
    <property type="match status" value="1"/>
</dbReference>
<evidence type="ECO:0000255" key="1">
    <source>
        <dbReference type="HAMAP-Rule" id="MF_01343"/>
    </source>
</evidence>
<evidence type="ECO:0000256" key="2">
    <source>
        <dbReference type="SAM" id="MobiDB-lite"/>
    </source>
</evidence>
<evidence type="ECO:0000305" key="3"/>
<keyword id="KW-0687">Ribonucleoprotein</keyword>
<keyword id="KW-0689">Ribosomal protein</keyword>
<keyword id="KW-0694">RNA-binding</keyword>
<keyword id="KW-0699">rRNA-binding</keyword>
<sequence length="89" mass="10168">MSLDTAEKQKLIENHQVHPTDTGSVEVQVAMLSKRISKLSDHLQGNIHDFASRQGLLKMIGKRKRLLSYLKDKNVQKYQELVKKIGIRG</sequence>
<accession>A2BQZ0</accession>
<protein>
    <recommendedName>
        <fullName evidence="1">Small ribosomal subunit protein uS15</fullName>
    </recommendedName>
    <alternativeName>
        <fullName evidence="3">30S ribosomal protein S15</fullName>
    </alternativeName>
</protein>
<organism>
    <name type="scientific">Prochlorococcus marinus (strain AS9601)</name>
    <dbReference type="NCBI Taxonomy" id="146891"/>
    <lineage>
        <taxon>Bacteria</taxon>
        <taxon>Bacillati</taxon>
        <taxon>Cyanobacteriota</taxon>
        <taxon>Cyanophyceae</taxon>
        <taxon>Synechococcales</taxon>
        <taxon>Prochlorococcaceae</taxon>
        <taxon>Prochlorococcus</taxon>
    </lineage>
</organism>
<reference key="1">
    <citation type="journal article" date="2007" name="PLoS Genet.">
        <title>Patterns and implications of gene gain and loss in the evolution of Prochlorococcus.</title>
        <authorList>
            <person name="Kettler G.C."/>
            <person name="Martiny A.C."/>
            <person name="Huang K."/>
            <person name="Zucker J."/>
            <person name="Coleman M.L."/>
            <person name="Rodrigue S."/>
            <person name="Chen F."/>
            <person name="Lapidus A."/>
            <person name="Ferriera S."/>
            <person name="Johnson J."/>
            <person name="Steglich C."/>
            <person name="Church G.M."/>
            <person name="Richardson P."/>
            <person name="Chisholm S.W."/>
        </authorList>
    </citation>
    <scope>NUCLEOTIDE SEQUENCE [LARGE SCALE GENOMIC DNA]</scope>
    <source>
        <strain>AS9601</strain>
    </source>
</reference>
<feature type="chain" id="PRO_1000054842" description="Small ribosomal subunit protein uS15">
    <location>
        <begin position="1"/>
        <end position="89"/>
    </location>
</feature>
<feature type="region of interest" description="Disordered" evidence="2">
    <location>
        <begin position="1"/>
        <end position="23"/>
    </location>
</feature>
<feature type="compositionally biased region" description="Basic and acidic residues" evidence="2">
    <location>
        <begin position="1"/>
        <end position="18"/>
    </location>
</feature>
<gene>
    <name evidence="1" type="primary">rpsO</name>
    <name evidence="1" type="synonym">rps15</name>
    <name type="ordered locus">A9601_09171</name>
</gene>